<evidence type="ECO:0000255" key="1">
    <source>
        <dbReference type="HAMAP-Rule" id="MF_01170"/>
    </source>
</evidence>
<dbReference type="EMBL" id="AE017194">
    <property type="protein sequence ID" value="AAS41240.1"/>
    <property type="molecule type" value="Genomic_DNA"/>
</dbReference>
<dbReference type="SMR" id="Q738S2"/>
<dbReference type="KEGG" id="bca:BCE_2321"/>
<dbReference type="HOGENOM" id="CLU_111022_0_0_9"/>
<dbReference type="Proteomes" id="UP000002527">
    <property type="component" value="Chromosome"/>
</dbReference>
<dbReference type="GO" id="GO:0005737">
    <property type="term" value="C:cytoplasm"/>
    <property type="evidence" value="ECO:0007669"/>
    <property type="project" value="UniProtKB-SubCell"/>
</dbReference>
<dbReference type="GO" id="GO:0003690">
    <property type="term" value="F:double-stranded DNA binding"/>
    <property type="evidence" value="ECO:0007669"/>
    <property type="project" value="UniProtKB-UniRule"/>
</dbReference>
<dbReference type="GO" id="GO:0008356">
    <property type="term" value="P:asymmetric cell division"/>
    <property type="evidence" value="ECO:0007669"/>
    <property type="project" value="UniProtKB-UniRule"/>
</dbReference>
<dbReference type="GO" id="GO:0030261">
    <property type="term" value="P:chromosome condensation"/>
    <property type="evidence" value="ECO:0007669"/>
    <property type="project" value="UniProtKB-UniRule"/>
</dbReference>
<dbReference type="GO" id="GO:0007059">
    <property type="term" value="P:chromosome segregation"/>
    <property type="evidence" value="ECO:0007669"/>
    <property type="project" value="UniProtKB-UniRule"/>
</dbReference>
<dbReference type="GO" id="GO:0030435">
    <property type="term" value="P:sporulation resulting in formation of a cellular spore"/>
    <property type="evidence" value="ECO:0007669"/>
    <property type="project" value="UniProtKB-UniRule"/>
</dbReference>
<dbReference type="Gene3D" id="1.10.1660.10">
    <property type="match status" value="1"/>
</dbReference>
<dbReference type="HAMAP" id="MF_01170">
    <property type="entry name" value="RacA"/>
    <property type="match status" value="1"/>
</dbReference>
<dbReference type="InterPro" id="IPR023522">
    <property type="entry name" value="Chrosome_anchoring_RacA"/>
</dbReference>
<dbReference type="NCBIfam" id="NF009646">
    <property type="entry name" value="PRK13182.1-1"/>
    <property type="match status" value="1"/>
</dbReference>
<dbReference type="SUPFAM" id="SSF58064">
    <property type="entry name" value="Influenza hemagglutinin (stalk)"/>
    <property type="match status" value="1"/>
</dbReference>
<sequence>MEYKTPFIAKKLGVSPKAVVRIAQQLNLTIEKNKYGHFIFTQDDLDQMLEYHLSQIEKSQNTHPTQKTSSNDVEELKTQVNTIVQNISSHDFEQLTAQLNTITRRLDRMEEQMQDKANDVVTYQLLQHRREMEEMLERIQKLEATLKKEEPIYITPDTKPIYEREKKPKRRKMIFSIFGL</sequence>
<comment type="function">
    <text evidence="1">Required for the formation of axial filaments and for anchoring the origin regions at the cell poles in sporulating cells, thus ensuring proper chromosome segregation in the prespore. Binds in a dispersed manner throughout the chromosome but preferentially to sites clustered in the origin portion of the chromosome, causing condensation of the chromosome and its remodeling into an elongated, anchored structure.</text>
</comment>
<comment type="subcellular location">
    <subcellularLocation>
        <location evidence="1">Cytoplasm</location>
    </subcellularLocation>
    <text evidence="1">Localizes to cell poles and nucleoid.</text>
</comment>
<comment type="similarity">
    <text evidence="1">Belongs to the RacA family.</text>
</comment>
<proteinExistence type="inferred from homology"/>
<organism>
    <name type="scientific">Bacillus cereus (strain ATCC 10987 / NRS 248)</name>
    <dbReference type="NCBI Taxonomy" id="222523"/>
    <lineage>
        <taxon>Bacteria</taxon>
        <taxon>Bacillati</taxon>
        <taxon>Bacillota</taxon>
        <taxon>Bacilli</taxon>
        <taxon>Bacillales</taxon>
        <taxon>Bacillaceae</taxon>
        <taxon>Bacillus</taxon>
        <taxon>Bacillus cereus group</taxon>
    </lineage>
</organism>
<name>RACA_BACC1</name>
<keyword id="KW-0131">Cell cycle</keyword>
<keyword id="KW-0132">Cell division</keyword>
<keyword id="KW-0159">Chromosome partition</keyword>
<keyword id="KW-0175">Coiled coil</keyword>
<keyword id="KW-0963">Cytoplasm</keyword>
<keyword id="KW-0238">DNA-binding</keyword>
<keyword id="KW-0749">Sporulation</keyword>
<reference key="1">
    <citation type="journal article" date="2004" name="Nucleic Acids Res.">
        <title>The genome sequence of Bacillus cereus ATCC 10987 reveals metabolic adaptations and a large plasmid related to Bacillus anthracis pXO1.</title>
        <authorList>
            <person name="Rasko D.A."/>
            <person name="Ravel J."/>
            <person name="Oekstad O.A."/>
            <person name="Helgason E."/>
            <person name="Cer R.Z."/>
            <person name="Jiang L."/>
            <person name="Shores K.A."/>
            <person name="Fouts D.E."/>
            <person name="Tourasse N.J."/>
            <person name="Angiuoli S.V."/>
            <person name="Kolonay J.F."/>
            <person name="Nelson W.C."/>
            <person name="Kolstoe A.-B."/>
            <person name="Fraser C.M."/>
            <person name="Read T.D."/>
        </authorList>
    </citation>
    <scope>NUCLEOTIDE SEQUENCE [LARGE SCALE GENOMIC DNA]</scope>
    <source>
        <strain>ATCC 10987 / NRS 248</strain>
    </source>
</reference>
<gene>
    <name evidence="1" type="primary">racA</name>
    <name type="ordered locus">BCE_2321</name>
</gene>
<feature type="chain" id="PRO_0000224151" description="Chromosome-anchoring protein RacA">
    <location>
        <begin position="1"/>
        <end position="180"/>
    </location>
</feature>
<feature type="DNA-binding region" description="H-T-H motif" evidence="1">
    <location>
        <begin position="5"/>
        <end position="25"/>
    </location>
</feature>
<feature type="coiled-coil region" evidence="1">
    <location>
        <begin position="89"/>
        <end position="151"/>
    </location>
</feature>
<accession>Q738S2</accession>
<protein>
    <recommendedName>
        <fullName evidence="1">Chromosome-anchoring protein RacA</fullName>
    </recommendedName>
</protein>